<comment type="function">
    <text evidence="1">Component of the large ribosomal subunit. The ribosome is a large ribonucleoprotein complex responsible for the synthesis of proteins in the cell.</text>
</comment>
<comment type="subunit">
    <text evidence="1">Component of the large ribosomal subunit.</text>
</comment>
<comment type="subcellular location">
    <subcellularLocation>
        <location evidence="1">Cytoplasm</location>
    </subcellularLocation>
</comment>
<comment type="similarity">
    <text evidence="4">Belongs to the eukaryotic ribosomal protein eL32 family.</text>
</comment>
<protein>
    <recommendedName>
        <fullName evidence="4">Large ribosomal subunit protein eL32</fullName>
    </recommendedName>
    <alternativeName>
        <fullName>60S ribosomal protein L32</fullName>
    </alternativeName>
</protein>
<name>RL32_RAT</name>
<keyword id="KW-0002">3D-structure</keyword>
<keyword id="KW-0963">Cytoplasm</keyword>
<keyword id="KW-0903">Direct protein sequencing</keyword>
<keyword id="KW-1017">Isopeptide bond</keyword>
<keyword id="KW-0597">Phosphoprotein</keyword>
<keyword id="KW-1185">Reference proteome</keyword>
<keyword id="KW-0687">Ribonucleoprotein</keyword>
<keyword id="KW-0689">Ribosomal protein</keyword>
<keyword id="KW-0832">Ubl conjugation</keyword>
<reference key="1">
    <citation type="journal article" date="1988" name="Nucleic Acids Res.">
        <title>The primary structure of rat ribosomal protein L32.</title>
        <authorList>
            <person name="Rajchel A."/>
            <person name="Chan Y.-L."/>
            <person name="Wool I.G."/>
        </authorList>
    </citation>
    <scope>NUCLEOTIDE SEQUENCE [MRNA]</scope>
    <scope>PROTEIN SEQUENCE OF 2-9</scope>
    <source>
        <strain>Sprague-Dawley</strain>
        <tissue>Liver</tissue>
    </source>
</reference>
<reference key="2">
    <citation type="journal article" date="2004" name="Genome Res.">
        <title>The status, quality, and expansion of the NIH full-length cDNA project: the Mammalian Gene Collection (MGC).</title>
        <authorList>
            <consortium name="The MGC Project Team"/>
        </authorList>
    </citation>
    <scope>NUCLEOTIDE SEQUENCE [LARGE SCALE MRNA]</scope>
    <source>
        <tissue>Ovary</tissue>
        <tissue>Pituitary</tissue>
    </source>
</reference>
<organism>
    <name type="scientific">Rattus norvegicus</name>
    <name type="common">Rat</name>
    <dbReference type="NCBI Taxonomy" id="10116"/>
    <lineage>
        <taxon>Eukaryota</taxon>
        <taxon>Metazoa</taxon>
        <taxon>Chordata</taxon>
        <taxon>Craniata</taxon>
        <taxon>Vertebrata</taxon>
        <taxon>Euteleostomi</taxon>
        <taxon>Mammalia</taxon>
        <taxon>Eutheria</taxon>
        <taxon>Euarchontoglires</taxon>
        <taxon>Glires</taxon>
        <taxon>Rodentia</taxon>
        <taxon>Myomorpha</taxon>
        <taxon>Muroidea</taxon>
        <taxon>Muridae</taxon>
        <taxon>Murinae</taxon>
        <taxon>Rattus</taxon>
    </lineage>
</organism>
<evidence type="ECO:0000250" key="1">
    <source>
        <dbReference type="UniProtKB" id="P62910"/>
    </source>
</evidence>
<evidence type="ECO:0000250" key="2">
    <source>
        <dbReference type="UniProtKB" id="P62911"/>
    </source>
</evidence>
<evidence type="ECO:0000269" key="3">
    <source>
    </source>
</evidence>
<evidence type="ECO:0000305" key="4"/>
<sequence length="135" mass="15860">MAALRPLVKPKIVKKRTKKFIRHQSDRYVKIKRNWRKPRGIDNRVRRRFKGQILMPNIGYGSNKKTKHMLPSGFRKFLVHNVKELEVLLMCNKSYCAEIAHNVSSKNRKAIVERAAQLAIRVTNPNARLRSEENE</sequence>
<accession>P62912</accession>
<accession>P02433</accession>
<accession>Q63ZV8</accession>
<feature type="initiator methionine" description="Removed" evidence="3">
    <location>
        <position position="1"/>
    </location>
</feature>
<feature type="chain" id="PRO_0000131117" description="Large ribosomal subunit protein eL32">
    <location>
        <begin position="2"/>
        <end position="135"/>
    </location>
</feature>
<feature type="modified residue" description="N6-succinyllysine" evidence="2">
    <location>
        <position position="50"/>
    </location>
</feature>
<feature type="modified residue" description="Phosphoserine" evidence="1">
    <location>
        <position position="62"/>
    </location>
</feature>
<feature type="cross-link" description="Glycyl lysine isopeptide (Lys-Gly) (interchain with G-Cter in SUMO2)" evidence="1">
    <location>
        <position position="9"/>
    </location>
</feature>
<dbReference type="EMBL" id="X06483">
    <property type="protein sequence ID" value="CAA29777.1"/>
    <property type="molecule type" value="mRNA"/>
</dbReference>
<dbReference type="EMBL" id="BC061562">
    <property type="protein sequence ID" value="AAH61562.1"/>
    <property type="molecule type" value="mRNA"/>
</dbReference>
<dbReference type="EMBL" id="BC082797">
    <property type="protein sequence ID" value="AAH82797.1"/>
    <property type="molecule type" value="mRNA"/>
</dbReference>
<dbReference type="PIR" id="S02123">
    <property type="entry name" value="R5RT32"/>
</dbReference>
<dbReference type="RefSeq" id="NP_037358.1">
    <property type="nucleotide sequence ID" value="NM_013226.3"/>
</dbReference>
<dbReference type="PDB" id="7QGG">
    <property type="method" value="EM"/>
    <property type="resolution" value="2.86 A"/>
    <property type="chains" value="f=1-135"/>
</dbReference>
<dbReference type="PDBsum" id="7QGG"/>
<dbReference type="EMDB" id="EMD-13954"/>
<dbReference type="SMR" id="P62912"/>
<dbReference type="BioGRID" id="247814">
    <property type="interactions" value="1"/>
</dbReference>
<dbReference type="FunCoup" id="P62912">
    <property type="interactions" value="3376"/>
</dbReference>
<dbReference type="STRING" id="10116.ENSRNOP00000014493"/>
<dbReference type="GlyGen" id="P62912">
    <property type="glycosylation" value="1 site, 1 O-linked glycan (1 site)"/>
</dbReference>
<dbReference type="iPTMnet" id="P62912"/>
<dbReference type="PhosphoSitePlus" id="P62912"/>
<dbReference type="jPOST" id="P62912"/>
<dbReference type="PaxDb" id="10116-ENSRNOP00000014493"/>
<dbReference type="Ensembl" id="ENSRNOT00000014493.6">
    <property type="protein sequence ID" value="ENSRNOP00000014493.4"/>
    <property type="gene ID" value="ENSRNOG00000010746.6"/>
</dbReference>
<dbReference type="GeneID" id="28298"/>
<dbReference type="KEGG" id="rno:28298"/>
<dbReference type="AGR" id="RGD:621203"/>
<dbReference type="CTD" id="6161"/>
<dbReference type="RGD" id="621203">
    <property type="gene designation" value="Rpl32"/>
</dbReference>
<dbReference type="VEuPathDB" id="HostDB:ENSRNOG00000032605"/>
<dbReference type="eggNOG" id="KOG0878">
    <property type="taxonomic scope" value="Eukaryota"/>
</dbReference>
<dbReference type="GeneTree" id="ENSGT00940000153973"/>
<dbReference type="HOGENOM" id="CLU_071479_4_1_1"/>
<dbReference type="InParanoid" id="P62912"/>
<dbReference type="OrthoDB" id="268693at2759"/>
<dbReference type="PhylomeDB" id="P62912"/>
<dbReference type="TreeFam" id="TF314947"/>
<dbReference type="Reactome" id="R-RNO-156827">
    <property type="pathway name" value="L13a-mediated translational silencing of Ceruloplasmin expression"/>
</dbReference>
<dbReference type="Reactome" id="R-RNO-1799339">
    <property type="pathway name" value="SRP-dependent cotranslational protein targeting to membrane"/>
</dbReference>
<dbReference type="Reactome" id="R-RNO-6791226">
    <property type="pathway name" value="Major pathway of rRNA processing in the nucleolus and cytosol"/>
</dbReference>
<dbReference type="Reactome" id="R-RNO-72689">
    <property type="pathway name" value="Formation of a pool of free 40S subunits"/>
</dbReference>
<dbReference type="Reactome" id="R-RNO-72706">
    <property type="pathway name" value="GTP hydrolysis and joining of the 60S ribosomal subunit"/>
</dbReference>
<dbReference type="Reactome" id="R-RNO-975956">
    <property type="pathway name" value="Nonsense Mediated Decay (NMD) independent of the Exon Junction Complex (EJC)"/>
</dbReference>
<dbReference type="Reactome" id="R-RNO-975957">
    <property type="pathway name" value="Nonsense Mediated Decay (NMD) enhanced by the Exon Junction Complex (EJC)"/>
</dbReference>
<dbReference type="PRO" id="PR:P62912"/>
<dbReference type="Proteomes" id="UP000002494">
    <property type="component" value="Chromosome 4"/>
</dbReference>
<dbReference type="Bgee" id="ENSRNOG00000010746">
    <property type="expression patterns" value="Expressed in thymus and 19 other cell types or tissues"/>
</dbReference>
<dbReference type="GO" id="GO:0005737">
    <property type="term" value="C:cytoplasm"/>
    <property type="evidence" value="ECO:0000266"/>
    <property type="project" value="RGD"/>
</dbReference>
<dbReference type="GO" id="GO:0098556">
    <property type="term" value="C:cytoplasmic side of rough endoplasmic reticulum membrane"/>
    <property type="evidence" value="ECO:0000266"/>
    <property type="project" value="RGD"/>
</dbReference>
<dbReference type="GO" id="GO:0022625">
    <property type="term" value="C:cytosolic large ribosomal subunit"/>
    <property type="evidence" value="ECO:0000314"/>
    <property type="project" value="RGD"/>
</dbReference>
<dbReference type="GO" id="GO:0022626">
    <property type="term" value="C:cytosolic ribosome"/>
    <property type="evidence" value="ECO:0000266"/>
    <property type="project" value="RGD"/>
</dbReference>
<dbReference type="GO" id="GO:0015934">
    <property type="term" value="C:large ribosomal subunit"/>
    <property type="evidence" value="ECO:0000266"/>
    <property type="project" value="RGD"/>
</dbReference>
<dbReference type="GO" id="GO:0045202">
    <property type="term" value="C:synapse"/>
    <property type="evidence" value="ECO:0000266"/>
    <property type="project" value="RGD"/>
</dbReference>
<dbReference type="GO" id="GO:0003735">
    <property type="term" value="F:structural constituent of ribosome"/>
    <property type="evidence" value="ECO:0000266"/>
    <property type="project" value="RGD"/>
</dbReference>
<dbReference type="GO" id="GO:0071549">
    <property type="term" value="P:cellular response to dexamethasone stimulus"/>
    <property type="evidence" value="ECO:0000270"/>
    <property type="project" value="RGD"/>
</dbReference>
<dbReference type="GO" id="GO:0002181">
    <property type="term" value="P:cytoplasmic translation"/>
    <property type="evidence" value="ECO:0000266"/>
    <property type="project" value="RGD"/>
</dbReference>
<dbReference type="GO" id="GO:0097421">
    <property type="term" value="P:liver regeneration"/>
    <property type="evidence" value="ECO:0000270"/>
    <property type="project" value="RGD"/>
</dbReference>
<dbReference type="CDD" id="cd00513">
    <property type="entry name" value="Ribosomal_L32_L32e"/>
    <property type="match status" value="1"/>
</dbReference>
<dbReference type="InterPro" id="IPR001515">
    <property type="entry name" value="Ribosomal_eL32"/>
</dbReference>
<dbReference type="InterPro" id="IPR018263">
    <property type="entry name" value="Ribosomal_eL32_CS"/>
</dbReference>
<dbReference type="InterPro" id="IPR036351">
    <property type="entry name" value="Ribosomal_eL32_sf"/>
</dbReference>
<dbReference type="PANTHER" id="PTHR23413">
    <property type="entry name" value="60S RIBOSOMAL PROTEIN L32 AND DNA-DIRECTED RNA POLYMERASE II, SUBUNIT N"/>
    <property type="match status" value="1"/>
</dbReference>
<dbReference type="PANTHER" id="PTHR23413:SF6">
    <property type="entry name" value="LARGE RIBOSOMAL SUBUNIT PROTEIN EL32"/>
    <property type="match status" value="1"/>
</dbReference>
<dbReference type="Pfam" id="PF01655">
    <property type="entry name" value="Ribosomal_L32e"/>
    <property type="match status" value="1"/>
</dbReference>
<dbReference type="SMART" id="SM01393">
    <property type="entry name" value="Ribosomal_L32e"/>
    <property type="match status" value="1"/>
</dbReference>
<dbReference type="SUPFAM" id="SSF52042">
    <property type="entry name" value="Ribosomal protein L32e"/>
    <property type="match status" value="1"/>
</dbReference>
<dbReference type="PROSITE" id="PS00580">
    <property type="entry name" value="RIBOSOMAL_L32E"/>
    <property type="match status" value="1"/>
</dbReference>
<proteinExistence type="evidence at protein level"/>
<gene>
    <name type="primary">Rpl32</name>
</gene>